<name>HACD_YEAST</name>
<gene>
    <name type="primary">PHS1</name>
    <name type="ordered locus">YJL097W</name>
    <name type="ORF">J0902</name>
</gene>
<comment type="function">
    <text evidence="3 4 5">Catalyzes the third of the four reactions of the long-chain fatty acids elongation cycle. This endoplasmic reticulum-bound enzymatic process, allows the addition of two carbons to the chain of long- and very long-chain fatty acids/VLCFAs per cycle. This enzyme catalyzes the dehydration of the 3-hydroxyacyl-CoA intermediate into trans-2,3-enoyl-CoA, within each cycle of fatty acid elongation. Thereby, it participates in the production of VLCFAs of different chain lengths that are involved in multiple biological processes as precursors of membrane lipids and lipid mediators.</text>
</comment>
<comment type="catalytic activity">
    <reaction evidence="3 4">
        <text>a very-long-chain (3R)-3-hydroxyacyl-CoA = a very-long-chain (2E)-enoyl-CoA + H2O</text>
        <dbReference type="Rhea" id="RHEA:45812"/>
        <dbReference type="ChEBI" id="CHEBI:15377"/>
        <dbReference type="ChEBI" id="CHEBI:83728"/>
        <dbReference type="ChEBI" id="CHEBI:85440"/>
        <dbReference type="EC" id="4.2.1.134"/>
    </reaction>
</comment>
<comment type="catalytic activity">
    <reaction evidence="3">
        <text>(3R)-hydroxyeicosanoyl-CoA = (2E)-eicosenoyl-CoA + H2O</text>
        <dbReference type="Rhea" id="RHEA:39175"/>
        <dbReference type="ChEBI" id="CHEBI:15377"/>
        <dbReference type="ChEBI" id="CHEBI:74691"/>
        <dbReference type="ChEBI" id="CHEBI:76373"/>
    </reaction>
    <physiologicalReaction direction="left-to-right" evidence="3">
        <dbReference type="Rhea" id="RHEA:39176"/>
    </physiologicalReaction>
</comment>
<comment type="catalytic activity">
    <reaction evidence="3">
        <text>(3R)-hydroxydocosanoyl-CoA = (2E)-docosenoyl-CoA + H2O</text>
        <dbReference type="Rhea" id="RHEA:39187"/>
        <dbReference type="ChEBI" id="CHEBI:15377"/>
        <dbReference type="ChEBI" id="CHEBI:74692"/>
        <dbReference type="ChEBI" id="CHEBI:76375"/>
    </reaction>
    <physiologicalReaction direction="left-to-right" evidence="3">
        <dbReference type="Rhea" id="RHEA:39188"/>
    </physiologicalReaction>
</comment>
<comment type="catalytic activity">
    <reaction evidence="3">
        <text>(3R)-hydroxyoctadecanoyl-CoA = (2E)-octadecenoyl-CoA + H2O</text>
        <dbReference type="Rhea" id="RHEA:39155"/>
        <dbReference type="ChEBI" id="CHEBI:15377"/>
        <dbReference type="ChEBI" id="CHEBI:71412"/>
        <dbReference type="ChEBI" id="CHEBI:76374"/>
    </reaction>
    <physiologicalReaction direction="left-to-right" evidence="3">
        <dbReference type="Rhea" id="RHEA:39156"/>
    </physiologicalReaction>
</comment>
<comment type="catalytic activity">
    <reaction evidence="3">
        <text>(3R)-hydroxytetracosanoyl-CoA = (2E)-tetracosenoyl-CoA + H2O</text>
        <dbReference type="Rhea" id="RHEA:39199"/>
        <dbReference type="ChEBI" id="CHEBI:15377"/>
        <dbReference type="ChEBI" id="CHEBI:74693"/>
        <dbReference type="ChEBI" id="CHEBI:76377"/>
    </reaction>
    <physiologicalReaction direction="left-to-right" evidence="3">
        <dbReference type="Rhea" id="RHEA:39200"/>
    </physiologicalReaction>
</comment>
<comment type="catalytic activity">
    <reaction evidence="3">
        <text>(3R)-hydroxyhexacosanoyl-CoA = (2E)-hexacosenoyl-CoA + H2O</text>
        <dbReference type="Rhea" id="RHEA:39211"/>
        <dbReference type="ChEBI" id="CHEBI:15377"/>
        <dbReference type="ChEBI" id="CHEBI:74281"/>
        <dbReference type="ChEBI" id="CHEBI:76378"/>
    </reaction>
    <physiologicalReaction direction="left-to-right" evidence="3">
        <dbReference type="Rhea" id="RHEA:39212"/>
    </physiologicalReaction>
</comment>
<comment type="catalytic activity">
    <reaction evidence="5">
        <text>(3R)-hydroxyhexadecanoyl-CoA = (2E)-hexadecenoyl-CoA + H2O</text>
        <dbReference type="Rhea" id="RHEA:39159"/>
        <dbReference type="ChEBI" id="CHEBI:15377"/>
        <dbReference type="ChEBI" id="CHEBI:61526"/>
        <dbReference type="ChEBI" id="CHEBI:74278"/>
    </reaction>
    <physiologicalReaction direction="left-to-right" evidence="5">
        <dbReference type="Rhea" id="RHEA:39160"/>
    </physiologicalReaction>
</comment>
<comment type="biophysicochemical properties">
    <kinetics>
        <KM evidence="5">5.5 uM for 3-hydroxypalmitoyl-CoA</KM>
        <Vmax evidence="5">84.0 pmol/min/ng enzyme</Vmax>
    </kinetics>
</comment>
<comment type="pathway">
    <text evidence="3 4">Lipid metabolism; fatty acid biosynthesis.</text>
</comment>
<comment type="subcellular location">
    <subcellularLocation>
        <location evidence="4">Endoplasmic reticulum membrane</location>
        <topology evidence="1">Multi-pass membrane protein</topology>
    </subcellularLocation>
    <subcellularLocation>
        <location evidence="2">Vacuole membrane</location>
        <topology evidence="1">Multi-pass membrane protein</topology>
    </subcellularLocation>
</comment>
<comment type="similarity">
    <text evidence="6">Belongs to the very long-chain fatty acids dehydratase HACD family.</text>
</comment>
<accession>P40857</accession>
<accession>D6VW87</accession>
<dbReference type="EC" id="4.2.1.134" evidence="3 4"/>
<dbReference type="EMBL" id="X77923">
    <property type="protein sequence ID" value="CAA54893.1"/>
    <property type="molecule type" value="Genomic_DNA"/>
</dbReference>
<dbReference type="EMBL" id="Z49372">
    <property type="protein sequence ID" value="CAA89391.1"/>
    <property type="molecule type" value="Genomic_DNA"/>
</dbReference>
<dbReference type="EMBL" id="AY557855">
    <property type="protein sequence ID" value="AAS56181.1"/>
    <property type="molecule type" value="Genomic_DNA"/>
</dbReference>
<dbReference type="EMBL" id="BK006943">
    <property type="protein sequence ID" value="DAA08703.1"/>
    <property type="molecule type" value="Genomic_DNA"/>
</dbReference>
<dbReference type="PIR" id="S50296">
    <property type="entry name" value="S50296"/>
</dbReference>
<dbReference type="RefSeq" id="NP_012438.1">
    <property type="nucleotide sequence ID" value="NM_001181530.1"/>
</dbReference>
<dbReference type="BioGRID" id="33660">
    <property type="interactions" value="284"/>
</dbReference>
<dbReference type="DIP" id="DIP-2104N"/>
<dbReference type="FunCoup" id="P40857">
    <property type="interactions" value="627"/>
</dbReference>
<dbReference type="IntAct" id="P40857">
    <property type="interactions" value="32"/>
</dbReference>
<dbReference type="STRING" id="4932.YJL097W"/>
<dbReference type="SwissLipids" id="SLP:000000492"/>
<dbReference type="CarbonylDB" id="P40857"/>
<dbReference type="PaxDb" id="4932-YJL097W"/>
<dbReference type="PeptideAtlas" id="P40857"/>
<dbReference type="TopDownProteomics" id="P40857"/>
<dbReference type="EnsemblFungi" id="YJL097W_mRNA">
    <property type="protein sequence ID" value="YJL097W"/>
    <property type="gene ID" value="YJL097W"/>
</dbReference>
<dbReference type="GeneID" id="853348"/>
<dbReference type="KEGG" id="sce:YJL097W"/>
<dbReference type="AGR" id="SGD:S000003633"/>
<dbReference type="SGD" id="S000003633">
    <property type="gene designation" value="PHS1"/>
</dbReference>
<dbReference type="VEuPathDB" id="FungiDB:YJL097W"/>
<dbReference type="eggNOG" id="KOG3187">
    <property type="taxonomic scope" value="Eukaryota"/>
</dbReference>
<dbReference type="GeneTree" id="ENSGT00530000062962"/>
<dbReference type="HOGENOM" id="CLU_034302_6_1_1"/>
<dbReference type="InParanoid" id="P40857"/>
<dbReference type="OMA" id="WSYILWQ"/>
<dbReference type="OrthoDB" id="46988at2759"/>
<dbReference type="BioCyc" id="MetaCyc:MONOMER3O-85"/>
<dbReference type="BioCyc" id="YEAST:MONOMER3O-85"/>
<dbReference type="BRENDA" id="4.2.1.134">
    <property type="organism ID" value="984"/>
</dbReference>
<dbReference type="Reactome" id="R-SCE-75876">
    <property type="pathway name" value="Synthesis of very long-chain fatty acyl-CoAs"/>
</dbReference>
<dbReference type="UniPathway" id="UPA00094"/>
<dbReference type="BioGRID-ORCS" id="853348">
    <property type="hits" value="4 hits in 10 CRISPR screens"/>
</dbReference>
<dbReference type="PRO" id="PR:P40857"/>
<dbReference type="Proteomes" id="UP000002311">
    <property type="component" value="Chromosome X"/>
</dbReference>
<dbReference type="RNAct" id="P40857">
    <property type="molecule type" value="protein"/>
</dbReference>
<dbReference type="GO" id="GO:0005783">
    <property type="term" value="C:endoplasmic reticulum"/>
    <property type="evidence" value="ECO:0007005"/>
    <property type="project" value="SGD"/>
</dbReference>
<dbReference type="GO" id="GO:0005789">
    <property type="term" value="C:endoplasmic reticulum membrane"/>
    <property type="evidence" value="ECO:0000314"/>
    <property type="project" value="SGD"/>
</dbReference>
<dbReference type="GO" id="GO:0000324">
    <property type="term" value="C:fungal-type vacuole"/>
    <property type="evidence" value="ECO:0000314"/>
    <property type="project" value="SGD"/>
</dbReference>
<dbReference type="GO" id="GO:0000329">
    <property type="term" value="C:fungal-type vacuole membrane"/>
    <property type="evidence" value="ECO:0007005"/>
    <property type="project" value="SGD"/>
</dbReference>
<dbReference type="GO" id="GO:0042175">
    <property type="term" value="C:nuclear outer membrane-endoplasmic reticulum membrane network"/>
    <property type="evidence" value="ECO:0007005"/>
    <property type="project" value="SGD"/>
</dbReference>
<dbReference type="GO" id="GO:0018812">
    <property type="term" value="F:3-hydroxyacyl-CoA dehydratase activity"/>
    <property type="evidence" value="ECO:0000315"/>
    <property type="project" value="SGD"/>
</dbReference>
<dbReference type="GO" id="GO:0004300">
    <property type="term" value="F:enoyl-CoA hydratase activity"/>
    <property type="evidence" value="ECO:0000314"/>
    <property type="project" value="SGD"/>
</dbReference>
<dbReference type="GO" id="GO:0102158">
    <property type="term" value="F:very-long-chain (3R)-3-hydroxyacyl-CoA dehydratase activity"/>
    <property type="evidence" value="ECO:0007669"/>
    <property type="project" value="UniProtKB-EC"/>
</dbReference>
<dbReference type="GO" id="GO:0030497">
    <property type="term" value="P:fatty acid elongation"/>
    <property type="evidence" value="ECO:0000315"/>
    <property type="project" value="SGD"/>
</dbReference>
<dbReference type="GO" id="GO:0030148">
    <property type="term" value="P:sphingolipid biosynthetic process"/>
    <property type="evidence" value="ECO:0000315"/>
    <property type="project" value="SGD"/>
</dbReference>
<dbReference type="GO" id="GO:0007034">
    <property type="term" value="P:vacuolar transport"/>
    <property type="evidence" value="ECO:0000315"/>
    <property type="project" value="SGD"/>
</dbReference>
<dbReference type="GO" id="GO:0042761">
    <property type="term" value="P:very long-chain fatty acid biosynthetic process"/>
    <property type="evidence" value="ECO:0000318"/>
    <property type="project" value="GO_Central"/>
</dbReference>
<dbReference type="InterPro" id="IPR007482">
    <property type="entry name" value="Tyr_Pase-like_PTPLA"/>
</dbReference>
<dbReference type="PANTHER" id="PTHR11035">
    <property type="entry name" value="VERY-LONG-CHAIN (3R)-3-HYDROXYACYL-COA DEHYDRATASE"/>
    <property type="match status" value="1"/>
</dbReference>
<dbReference type="PANTHER" id="PTHR11035:SF3">
    <property type="entry name" value="VERY-LONG-CHAIN (3R)-3-HYDROXYACYL-COA DEHYDRATASE"/>
    <property type="match status" value="1"/>
</dbReference>
<dbReference type="Pfam" id="PF04387">
    <property type="entry name" value="PTPLA"/>
    <property type="match status" value="1"/>
</dbReference>
<keyword id="KW-0256">Endoplasmic reticulum</keyword>
<keyword id="KW-0275">Fatty acid biosynthesis</keyword>
<keyword id="KW-0276">Fatty acid metabolism</keyword>
<keyword id="KW-0444">Lipid biosynthesis</keyword>
<keyword id="KW-0443">Lipid metabolism</keyword>
<keyword id="KW-0456">Lyase</keyword>
<keyword id="KW-0472">Membrane</keyword>
<keyword id="KW-1185">Reference proteome</keyword>
<keyword id="KW-0812">Transmembrane</keyword>
<keyword id="KW-1133">Transmembrane helix</keyword>
<keyword id="KW-0926">Vacuole</keyword>
<sequence>MSKKLASPLSFLPLYNLLSAVGWSYLLYLVISLYPKVGQPAFFYQTKNVATLVQCGAIIEIINSFLGVVRSPLLTTVAQVSSRLLVVLGIFQLLPNTSGVQSVVYISLLLAWSITEIVRYLYYFFMLVFKNGAPKILILLRYNLFWILYPTGVASELRIIYCALNAAESQYSLLYKRILIAAMLAYIPGFPMLFLHMVAQRKKVMKSLRSSFGKKLI</sequence>
<protein>
    <recommendedName>
        <fullName evidence="6">Very-long-chain (3R)-3-hydroxyacyl-CoA dehydratase PHS1</fullName>
        <ecNumber evidence="3 4">4.2.1.134</ecNumber>
    </recommendedName>
    <alternativeName>
        <fullName>3-hydroxyacyl-CoA dehydratase PHS1</fullName>
        <shortName>HACD</shortName>
    </alternativeName>
    <alternativeName>
        <fullName>PTPLA homolog involved in sphingolipid biosynthesis protein 1</fullName>
    </alternativeName>
</protein>
<evidence type="ECO:0000255" key="1"/>
<evidence type="ECO:0000269" key="2">
    <source>
    </source>
</evidence>
<evidence type="ECO:0000269" key="3">
    <source>
    </source>
</evidence>
<evidence type="ECO:0000269" key="4">
    <source>
    </source>
</evidence>
<evidence type="ECO:0000269" key="5">
    <source>
    </source>
</evidence>
<evidence type="ECO:0000305" key="6"/>
<evidence type="ECO:0000305" key="7">
    <source>
    </source>
</evidence>
<reference key="1">
    <citation type="journal article" date="1994" name="Yeast">
        <title>Sequence and function analysis of a 9.74 kb fragment of Saccharomyces cerevisiae chromosome X including the BCK1 gene.</title>
        <authorList>
            <person name="Miosga T."/>
            <person name="Boles E."/>
            <person name="Schaaff-Gerstenschlaeger I."/>
            <person name="Schmitt S."/>
            <person name="Zimmermann F.K."/>
        </authorList>
    </citation>
    <scope>NUCLEOTIDE SEQUENCE [GENOMIC DNA]</scope>
    <source>
        <strain>ATCC 204508 / S288c</strain>
    </source>
</reference>
<reference key="2">
    <citation type="journal article" date="1996" name="EMBO J.">
        <title>Complete nucleotide sequence of Saccharomyces cerevisiae chromosome X.</title>
        <authorList>
            <person name="Galibert F."/>
            <person name="Alexandraki D."/>
            <person name="Baur A."/>
            <person name="Boles E."/>
            <person name="Chalwatzis N."/>
            <person name="Chuat J.-C."/>
            <person name="Coster F."/>
            <person name="Cziepluch C."/>
            <person name="de Haan M."/>
            <person name="Domdey H."/>
            <person name="Durand P."/>
            <person name="Entian K.-D."/>
            <person name="Gatius M."/>
            <person name="Goffeau A."/>
            <person name="Grivell L.A."/>
            <person name="Hennemann A."/>
            <person name="Herbert C.J."/>
            <person name="Heumann K."/>
            <person name="Hilger F."/>
            <person name="Hollenberg C.P."/>
            <person name="Huang M.-E."/>
            <person name="Jacq C."/>
            <person name="Jauniaux J.-C."/>
            <person name="Katsoulou C."/>
            <person name="Kirchrath L."/>
            <person name="Kleine K."/>
            <person name="Kordes E."/>
            <person name="Koetter P."/>
            <person name="Liebl S."/>
            <person name="Louis E.J."/>
            <person name="Manus V."/>
            <person name="Mewes H.-W."/>
            <person name="Miosga T."/>
            <person name="Obermaier B."/>
            <person name="Perea J."/>
            <person name="Pohl T.M."/>
            <person name="Portetelle D."/>
            <person name="Pujol A."/>
            <person name="Purnelle B."/>
            <person name="Ramezani Rad M."/>
            <person name="Rasmussen S.W."/>
            <person name="Rose M."/>
            <person name="Rossau R."/>
            <person name="Schaaff-Gerstenschlaeger I."/>
            <person name="Smits P.H.M."/>
            <person name="Scarcez T."/>
            <person name="Soriano N."/>
            <person name="To Van D."/>
            <person name="Tzermia M."/>
            <person name="Van Broekhoven A."/>
            <person name="Vandenbol M."/>
            <person name="Wedler H."/>
            <person name="von Wettstein D."/>
            <person name="Wambutt R."/>
            <person name="Zagulski M."/>
            <person name="Zollner A."/>
            <person name="Karpfinger-Hartl L."/>
        </authorList>
    </citation>
    <scope>NUCLEOTIDE SEQUENCE [LARGE SCALE GENOMIC DNA]</scope>
    <source>
        <strain>ATCC 204508 / S288c</strain>
    </source>
</reference>
<reference key="3">
    <citation type="journal article" date="2014" name="G3 (Bethesda)">
        <title>The reference genome sequence of Saccharomyces cerevisiae: Then and now.</title>
        <authorList>
            <person name="Engel S.R."/>
            <person name="Dietrich F.S."/>
            <person name="Fisk D.G."/>
            <person name="Binkley G."/>
            <person name="Balakrishnan R."/>
            <person name="Costanzo M.C."/>
            <person name="Dwight S.S."/>
            <person name="Hitz B.C."/>
            <person name="Karra K."/>
            <person name="Nash R.S."/>
            <person name="Weng S."/>
            <person name="Wong E.D."/>
            <person name="Lloyd P."/>
            <person name="Skrzypek M.S."/>
            <person name="Miyasato S.R."/>
            <person name="Simison M."/>
            <person name="Cherry J.M."/>
        </authorList>
    </citation>
    <scope>GENOME REANNOTATION</scope>
    <source>
        <strain>ATCC 204508 / S288c</strain>
    </source>
</reference>
<reference key="4">
    <citation type="journal article" date="2007" name="Genome Res.">
        <title>Approaching a complete repository of sequence-verified protein-encoding clones for Saccharomyces cerevisiae.</title>
        <authorList>
            <person name="Hu Y."/>
            <person name="Rolfs A."/>
            <person name="Bhullar B."/>
            <person name="Murthy T.V.S."/>
            <person name="Zhu C."/>
            <person name="Berger M.F."/>
            <person name="Camargo A.A."/>
            <person name="Kelley F."/>
            <person name="McCarron S."/>
            <person name="Jepson D."/>
            <person name="Richardson A."/>
            <person name="Raphael J."/>
            <person name="Moreira D."/>
            <person name="Taycher E."/>
            <person name="Zuo D."/>
            <person name="Mohr S."/>
            <person name="Kane M.F."/>
            <person name="Williamson J."/>
            <person name="Simpson A.J.G."/>
            <person name="Bulyk M.L."/>
            <person name="Harlow E."/>
            <person name="Marsischky G."/>
            <person name="Kolodner R.D."/>
            <person name="LaBaer J."/>
        </authorList>
    </citation>
    <scope>NUCLEOTIDE SEQUENCE [GENOMIC DNA]</scope>
    <source>
        <strain>ATCC 204508 / S288c</strain>
    </source>
</reference>
<reference key="5">
    <citation type="journal article" date="2003" name="Nature">
        <title>Global analysis of protein localization in budding yeast.</title>
        <authorList>
            <person name="Huh W.-K."/>
            <person name="Falvo J.V."/>
            <person name="Gerke L.C."/>
            <person name="Carroll A.S."/>
            <person name="Howson R.W."/>
            <person name="Weissman J.S."/>
            <person name="O'Shea E.K."/>
        </authorList>
    </citation>
    <scope>SUBCELLULAR LOCATION [LARGE SCALE ANALYSIS]</scope>
</reference>
<reference key="6">
    <citation type="journal article" date="2006" name="Proc. Natl. Acad. Sci. U.S.A.">
        <title>A global topology map of the Saccharomyces cerevisiae membrane proteome.</title>
        <authorList>
            <person name="Kim H."/>
            <person name="Melen K."/>
            <person name="Oesterberg M."/>
            <person name="von Heijne G."/>
        </authorList>
    </citation>
    <scope>TOPOLOGY [LARGE SCALE ANALYSIS]</scope>
    <source>
        <strain>ATCC 208353 / W303-1A</strain>
    </source>
</reference>
<reference key="7">
    <citation type="journal article" date="2007" name="Cell">
        <title>A molecular caliper mechanism for determining very long-chain fatty acid length.</title>
        <authorList>
            <person name="Denic V."/>
            <person name="Weissman J.S."/>
        </authorList>
    </citation>
    <scope>FUNCTION</scope>
    <scope>CATALYTIC ACTIVITY</scope>
    <scope>PATHWAY</scope>
</reference>
<reference key="8">
    <citation type="journal article" date="2008" name="J. Biol. Chem.">
        <title>Membrane topology and essential amino acid residues of Phs1, a 3-hydroxyacyl-CoA dehydratase involved in very long-chain fatty acid elongation.</title>
        <authorList>
            <person name="Kihara A."/>
            <person name="Sakuraba H."/>
            <person name="Ikeda M."/>
            <person name="Denpoh A."/>
            <person name="Igarashi Y."/>
        </authorList>
    </citation>
    <scope>FUNCTION</scope>
    <scope>SUBCELLULAR LOCATION</scope>
    <scope>TOPOLOGY</scope>
    <scope>MUTAGENESIS OF TYR-149 AND GLU-156</scope>
    <scope>ACTIVE SITE</scope>
    <scope>CATALYTIC ACTIVITY</scope>
    <scope>PATHWAY</scope>
</reference>
<reference key="9">
    <citation type="journal article" date="2013" name="FEBS Lett.">
        <title>Identification of residues important for the catalysis, structure maintenance, and substrate specificity of yeast 3-hydroxyacyl-CoA dehydratase Phs1.</title>
        <authorList>
            <person name="Yazawa T."/>
            <person name="Naganuma T."/>
            <person name="Yamagata M."/>
            <person name="Kihara A."/>
        </authorList>
    </citation>
    <scope>FUNCTION</scope>
    <scope>CATALYTIC ACTIVITY</scope>
    <scope>BIOPHYSICOCHEMICAL PROPERTIES</scope>
    <scope>MUTAGENESIS OF GLU-60; GLN-79; ARG-83; GLU-116; ARG-119; ARG-141 AND GLY-152</scope>
</reference>
<proteinExistence type="evidence at protein level"/>
<feature type="chain" id="PRO_0000203047" description="Very-long-chain (3R)-3-hydroxyacyl-CoA dehydratase PHS1">
    <location>
        <begin position="1"/>
        <end position="217"/>
    </location>
</feature>
<feature type="topological domain" description="Cytoplasmic" evidence="1">
    <location>
        <begin position="1"/>
        <end position="11"/>
    </location>
</feature>
<feature type="transmembrane region" description="Helical" evidence="1">
    <location>
        <begin position="12"/>
        <end position="29"/>
    </location>
</feature>
<feature type="topological domain" description="Lumenal" evidence="1">
    <location>
        <begin position="30"/>
        <end position="47"/>
    </location>
</feature>
<feature type="transmembrane region" description="Helical" evidence="1">
    <location>
        <begin position="48"/>
        <end position="66"/>
    </location>
</feature>
<feature type="topological domain" description="Cytoplasmic" evidence="1">
    <location>
        <begin position="67"/>
        <end position="76"/>
    </location>
</feature>
<feature type="transmembrane region" description="Helical" evidence="1">
    <location>
        <begin position="77"/>
        <end position="94"/>
    </location>
</feature>
<feature type="topological domain" description="Lumenal" evidence="1">
    <location>
        <begin position="95"/>
        <end position="99"/>
    </location>
</feature>
<feature type="transmembrane region" description="Helical" evidence="1">
    <location>
        <begin position="100"/>
        <end position="117"/>
    </location>
</feature>
<feature type="topological domain" description="Cytoplasmic" evidence="1">
    <location>
        <begin position="118"/>
        <end position="142"/>
    </location>
</feature>
<feature type="transmembrane region" description="Helical" evidence="1">
    <location>
        <begin position="143"/>
        <end position="160"/>
    </location>
</feature>
<feature type="topological domain" description="Lumenal" evidence="1">
    <location>
        <begin position="161"/>
        <end position="178"/>
    </location>
</feature>
<feature type="transmembrane region" description="Helical" evidence="1">
    <location>
        <begin position="179"/>
        <end position="196"/>
    </location>
</feature>
<feature type="topological domain" description="Cytoplasmic" evidence="1">
    <location>
        <begin position="197"/>
        <end position="217"/>
    </location>
</feature>
<feature type="short sequence motif" description="Endoplasmic reticulum retention signal">
    <location>
        <begin position="214"/>
        <end position="217"/>
    </location>
</feature>
<feature type="active site" evidence="7">
    <location>
        <position position="149"/>
    </location>
</feature>
<feature type="active site" evidence="7">
    <location>
        <position position="156"/>
    </location>
</feature>
<feature type="mutagenesis site" description="Digitonin sensitive, reduces structural integrity of the protein. Affects the substrate specificity." evidence="5">
    <original>E</original>
    <variation>A</variation>
    <location>
        <position position="60"/>
    </location>
</feature>
<feature type="mutagenesis site" description="Digitonin sensitive, reduces structural integrity of the protein." evidence="5">
    <original>Q</original>
    <variation>A</variation>
    <location>
        <position position="79"/>
    </location>
</feature>
<feature type="mutagenesis site" description="Greatly inhibits the fatty acid elongation cycle. Displays normal KM but reduced Vmax values." evidence="5">
    <original>R</original>
    <variation>A</variation>
    <location>
        <position position="83"/>
    </location>
</feature>
<feature type="mutagenesis site" description="Exhibits a moderate fatty acid elongation defect." evidence="5">
    <original>E</original>
    <variation>A</variation>
    <location>
        <position position="116"/>
    </location>
</feature>
<feature type="mutagenesis site" description="Exhibits a moderate fatty acid elongation defect." evidence="5">
    <original>R</original>
    <variation>A</variation>
    <location>
        <position position="119"/>
    </location>
</feature>
<feature type="mutagenesis site" description="Digitonin sensitive, reduces structural integrity of the protein. Greatly inhibits the fatty acid elongation cycle. Displays a higher KM and lower Vmax values." evidence="5">
    <original>R</original>
    <variation>A</variation>
    <location>
        <position position="141"/>
    </location>
</feature>
<feature type="mutagenesis site" description="No catalytic activity." evidence="4">
    <original>Y</original>
    <variation>A</variation>
    <location>
        <position position="149"/>
    </location>
</feature>
<feature type="mutagenesis site" description="Greatly inhibits the fatty acid elongation cycle. Displays normal KM but reduced Vmax values." evidence="5">
    <original>G</original>
    <variation>A</variation>
    <location>
        <position position="152"/>
    </location>
</feature>
<feature type="mutagenesis site" description="No catalytic activity." evidence="4">
    <original>E</original>
    <variation>A</variation>
    <location>
        <position position="156"/>
    </location>
</feature>
<organism>
    <name type="scientific">Saccharomyces cerevisiae (strain ATCC 204508 / S288c)</name>
    <name type="common">Baker's yeast</name>
    <dbReference type="NCBI Taxonomy" id="559292"/>
    <lineage>
        <taxon>Eukaryota</taxon>
        <taxon>Fungi</taxon>
        <taxon>Dikarya</taxon>
        <taxon>Ascomycota</taxon>
        <taxon>Saccharomycotina</taxon>
        <taxon>Saccharomycetes</taxon>
        <taxon>Saccharomycetales</taxon>
        <taxon>Saccharomycetaceae</taxon>
        <taxon>Saccharomyces</taxon>
    </lineage>
</organism>